<organism>
    <name type="scientific">Haemophilus influenzae (strain 86-028NP)</name>
    <dbReference type="NCBI Taxonomy" id="281310"/>
    <lineage>
        <taxon>Bacteria</taxon>
        <taxon>Pseudomonadati</taxon>
        <taxon>Pseudomonadota</taxon>
        <taxon>Gammaproteobacteria</taxon>
        <taxon>Pasteurellales</taxon>
        <taxon>Pasteurellaceae</taxon>
        <taxon>Haemophilus</taxon>
    </lineage>
</organism>
<accession>Q4QNH3</accession>
<comment type="catalytic activity">
    <reaction evidence="1">
        <text>tRNA(His) + L-histidine + ATP = L-histidyl-tRNA(His) + AMP + diphosphate + H(+)</text>
        <dbReference type="Rhea" id="RHEA:17313"/>
        <dbReference type="Rhea" id="RHEA-COMP:9665"/>
        <dbReference type="Rhea" id="RHEA-COMP:9689"/>
        <dbReference type="ChEBI" id="CHEBI:15378"/>
        <dbReference type="ChEBI" id="CHEBI:30616"/>
        <dbReference type="ChEBI" id="CHEBI:33019"/>
        <dbReference type="ChEBI" id="CHEBI:57595"/>
        <dbReference type="ChEBI" id="CHEBI:78442"/>
        <dbReference type="ChEBI" id="CHEBI:78527"/>
        <dbReference type="ChEBI" id="CHEBI:456215"/>
        <dbReference type="EC" id="6.1.1.21"/>
    </reaction>
</comment>
<comment type="subunit">
    <text evidence="1">Homodimer.</text>
</comment>
<comment type="subcellular location">
    <subcellularLocation>
        <location evidence="1">Cytoplasm</location>
    </subcellularLocation>
</comment>
<comment type="similarity">
    <text evidence="1">Belongs to the class-II aminoacyl-tRNA synthetase family.</text>
</comment>
<gene>
    <name evidence="1" type="primary">hisS</name>
    <name type="ordered locus">NTHI0489</name>
</gene>
<name>SYH_HAEI8</name>
<protein>
    <recommendedName>
        <fullName evidence="1">Histidine--tRNA ligase</fullName>
        <ecNumber evidence="1">6.1.1.21</ecNumber>
    </recommendedName>
    <alternativeName>
        <fullName evidence="1">Histidyl-tRNA synthetase</fullName>
        <shortName evidence="1">HisRS</shortName>
    </alternativeName>
</protein>
<reference key="1">
    <citation type="journal article" date="2005" name="J. Bacteriol.">
        <title>Genomic sequence of an otitis media isolate of nontypeable Haemophilus influenzae: comparative study with H. influenzae serotype d, strain KW20.</title>
        <authorList>
            <person name="Harrison A."/>
            <person name="Dyer D.W."/>
            <person name="Gillaspy A."/>
            <person name="Ray W.C."/>
            <person name="Mungur R."/>
            <person name="Carson M.B."/>
            <person name="Zhong H."/>
            <person name="Gipson J."/>
            <person name="Gipson M."/>
            <person name="Johnson L.S."/>
            <person name="Lewis L."/>
            <person name="Bakaletz L.O."/>
            <person name="Munson R.S. Jr."/>
        </authorList>
    </citation>
    <scope>NUCLEOTIDE SEQUENCE [LARGE SCALE GENOMIC DNA]</scope>
    <source>
        <strain>86-028NP</strain>
    </source>
</reference>
<sequence length="423" mass="47670">MAKTIQAIRGMNDCAPTESPLWQWIEAQVRNVLNSYGYSEVRMPIVESTPLFARAIGEVTDVVSKEMYTFWDNDEQLTLRPEGTAGCVRAAIEHGWIYNNEQRLWYIGPMFRHERPQKGRYRQFHQVGVEVFGIANPEIDAELIMLTYRLWKALGIDQHVTLQLNSIGSLEARANYRSALVGFLENHQDLMSDEEKERLVRNPLRILDTKNPELQKVLDNAPKLLDYLDDESRAHFEQLCSLLDAVGIQYEINPKLVRGLDYYNKTVFEWVTSALGAQGTVCGGGRYDGLVEQLGGHATPSIGFAMGLERLVLLVQEVNPNVPTKSAVDIYVVYQGEGATLVAFELAEKVRSELPHLNTMLHCSGGNFKKQFKRADKSGATLALVIGESEVQNKQVVVKHLQGGTDQQTLDLVNIIDYLQTQF</sequence>
<dbReference type="EC" id="6.1.1.21" evidence="1"/>
<dbReference type="EMBL" id="CP000057">
    <property type="protein sequence ID" value="AAX87424.1"/>
    <property type="molecule type" value="Genomic_DNA"/>
</dbReference>
<dbReference type="RefSeq" id="WP_011272009.1">
    <property type="nucleotide sequence ID" value="NC_007146.2"/>
</dbReference>
<dbReference type="SMR" id="Q4QNH3"/>
<dbReference type="KEGG" id="hit:NTHI0489"/>
<dbReference type="HOGENOM" id="CLU_025113_1_1_6"/>
<dbReference type="Proteomes" id="UP000002525">
    <property type="component" value="Chromosome"/>
</dbReference>
<dbReference type="GO" id="GO:0005737">
    <property type="term" value="C:cytoplasm"/>
    <property type="evidence" value="ECO:0007669"/>
    <property type="project" value="UniProtKB-SubCell"/>
</dbReference>
<dbReference type="GO" id="GO:0005524">
    <property type="term" value="F:ATP binding"/>
    <property type="evidence" value="ECO:0007669"/>
    <property type="project" value="UniProtKB-UniRule"/>
</dbReference>
<dbReference type="GO" id="GO:0004821">
    <property type="term" value="F:histidine-tRNA ligase activity"/>
    <property type="evidence" value="ECO:0007669"/>
    <property type="project" value="UniProtKB-UniRule"/>
</dbReference>
<dbReference type="GO" id="GO:0006427">
    <property type="term" value="P:histidyl-tRNA aminoacylation"/>
    <property type="evidence" value="ECO:0007669"/>
    <property type="project" value="UniProtKB-UniRule"/>
</dbReference>
<dbReference type="CDD" id="cd00773">
    <property type="entry name" value="HisRS-like_core"/>
    <property type="match status" value="1"/>
</dbReference>
<dbReference type="CDD" id="cd00859">
    <property type="entry name" value="HisRS_anticodon"/>
    <property type="match status" value="1"/>
</dbReference>
<dbReference type="FunFam" id="3.30.930.10:FF:000005">
    <property type="entry name" value="Histidine--tRNA ligase"/>
    <property type="match status" value="1"/>
</dbReference>
<dbReference type="Gene3D" id="3.40.50.800">
    <property type="entry name" value="Anticodon-binding domain"/>
    <property type="match status" value="1"/>
</dbReference>
<dbReference type="Gene3D" id="3.30.930.10">
    <property type="entry name" value="Bira Bifunctional Protein, Domain 2"/>
    <property type="match status" value="1"/>
</dbReference>
<dbReference type="HAMAP" id="MF_00127">
    <property type="entry name" value="His_tRNA_synth"/>
    <property type="match status" value="1"/>
</dbReference>
<dbReference type="InterPro" id="IPR006195">
    <property type="entry name" value="aa-tRNA-synth_II"/>
</dbReference>
<dbReference type="InterPro" id="IPR045864">
    <property type="entry name" value="aa-tRNA-synth_II/BPL/LPL"/>
</dbReference>
<dbReference type="InterPro" id="IPR004154">
    <property type="entry name" value="Anticodon-bd"/>
</dbReference>
<dbReference type="InterPro" id="IPR036621">
    <property type="entry name" value="Anticodon-bd_dom_sf"/>
</dbReference>
<dbReference type="InterPro" id="IPR015807">
    <property type="entry name" value="His-tRNA-ligase"/>
</dbReference>
<dbReference type="InterPro" id="IPR041715">
    <property type="entry name" value="HisRS-like_core"/>
</dbReference>
<dbReference type="InterPro" id="IPR004516">
    <property type="entry name" value="HisRS/HisZ"/>
</dbReference>
<dbReference type="InterPro" id="IPR033656">
    <property type="entry name" value="HisRS_anticodon"/>
</dbReference>
<dbReference type="NCBIfam" id="TIGR00442">
    <property type="entry name" value="hisS"/>
    <property type="match status" value="1"/>
</dbReference>
<dbReference type="PANTHER" id="PTHR43707:SF1">
    <property type="entry name" value="HISTIDINE--TRNA LIGASE, MITOCHONDRIAL-RELATED"/>
    <property type="match status" value="1"/>
</dbReference>
<dbReference type="PANTHER" id="PTHR43707">
    <property type="entry name" value="HISTIDYL-TRNA SYNTHETASE"/>
    <property type="match status" value="1"/>
</dbReference>
<dbReference type="Pfam" id="PF03129">
    <property type="entry name" value="HGTP_anticodon"/>
    <property type="match status" value="1"/>
</dbReference>
<dbReference type="Pfam" id="PF13393">
    <property type="entry name" value="tRNA-synt_His"/>
    <property type="match status" value="1"/>
</dbReference>
<dbReference type="PIRSF" id="PIRSF001549">
    <property type="entry name" value="His-tRNA_synth"/>
    <property type="match status" value="1"/>
</dbReference>
<dbReference type="SUPFAM" id="SSF52954">
    <property type="entry name" value="Class II aaRS ABD-related"/>
    <property type="match status" value="1"/>
</dbReference>
<dbReference type="SUPFAM" id="SSF55681">
    <property type="entry name" value="Class II aaRS and biotin synthetases"/>
    <property type="match status" value="1"/>
</dbReference>
<dbReference type="PROSITE" id="PS50862">
    <property type="entry name" value="AA_TRNA_LIGASE_II"/>
    <property type="match status" value="1"/>
</dbReference>
<keyword id="KW-0030">Aminoacyl-tRNA synthetase</keyword>
<keyword id="KW-0067">ATP-binding</keyword>
<keyword id="KW-0963">Cytoplasm</keyword>
<keyword id="KW-0436">Ligase</keyword>
<keyword id="KW-0547">Nucleotide-binding</keyword>
<keyword id="KW-0648">Protein biosynthesis</keyword>
<proteinExistence type="inferred from homology"/>
<feature type="chain" id="PRO_0000136172" description="Histidine--tRNA ligase">
    <location>
        <begin position="1"/>
        <end position="423"/>
    </location>
</feature>
<evidence type="ECO:0000255" key="1">
    <source>
        <dbReference type="HAMAP-Rule" id="MF_00127"/>
    </source>
</evidence>